<accession>B1LF43</accession>
<comment type="function">
    <text evidence="1">Catalyzes the phosphorylation of D-glycero-D-manno-heptose 7-phosphate at the C-1 position to selectively form D-glycero-beta-D-manno-heptose-1,7-bisphosphate.</text>
</comment>
<comment type="function">
    <text evidence="1">Catalyzes the ADP transfer from ATP to D-glycero-beta-D-manno-heptose 1-phosphate, yielding ADP-D-glycero-beta-D-manno-heptose.</text>
</comment>
<comment type="catalytic activity">
    <reaction evidence="1">
        <text>D-glycero-beta-D-manno-heptose 7-phosphate + ATP = D-glycero-beta-D-manno-heptose 1,7-bisphosphate + ADP + H(+)</text>
        <dbReference type="Rhea" id="RHEA:27473"/>
        <dbReference type="ChEBI" id="CHEBI:15378"/>
        <dbReference type="ChEBI" id="CHEBI:30616"/>
        <dbReference type="ChEBI" id="CHEBI:60204"/>
        <dbReference type="ChEBI" id="CHEBI:60208"/>
        <dbReference type="ChEBI" id="CHEBI:456216"/>
        <dbReference type="EC" id="2.7.1.167"/>
    </reaction>
</comment>
<comment type="catalytic activity">
    <reaction evidence="1">
        <text>D-glycero-beta-D-manno-heptose 1-phosphate + ATP + H(+) = ADP-D-glycero-beta-D-manno-heptose + diphosphate</text>
        <dbReference type="Rhea" id="RHEA:27465"/>
        <dbReference type="ChEBI" id="CHEBI:15378"/>
        <dbReference type="ChEBI" id="CHEBI:30616"/>
        <dbReference type="ChEBI" id="CHEBI:33019"/>
        <dbReference type="ChEBI" id="CHEBI:59967"/>
        <dbReference type="ChEBI" id="CHEBI:61593"/>
        <dbReference type="EC" id="2.7.7.70"/>
    </reaction>
</comment>
<comment type="pathway">
    <text evidence="1">Nucleotide-sugar biosynthesis; ADP-L-glycero-beta-D-manno-heptose biosynthesis; ADP-L-glycero-beta-D-manno-heptose from D-glycero-beta-D-manno-heptose 7-phosphate: step 1/4.</text>
</comment>
<comment type="pathway">
    <text evidence="1">Nucleotide-sugar biosynthesis; ADP-L-glycero-beta-D-manno-heptose biosynthesis; ADP-L-glycero-beta-D-manno-heptose from D-glycero-beta-D-manno-heptose 7-phosphate: step 3/4.</text>
</comment>
<comment type="subunit">
    <text evidence="1">Homodimer.</text>
</comment>
<comment type="similarity">
    <text evidence="1">In the N-terminal section; belongs to the carbohydrate kinase PfkB family.</text>
</comment>
<comment type="similarity">
    <text evidence="1">In the C-terminal section; belongs to the cytidylyltransferase family.</text>
</comment>
<sequence>MKVTLPEFERAGVMVVGDVMLDRYWYGPTSRISPEAPVPVVKVNTIEERPGGAANVAMNIASLGANARLVGLTGIDDAARALSKSLADVNVKCDFVSVPTHPTITKLRVLSRNQQLIRLDFEEGFEGVDPQPLHERINQALSSIGALVLSDYAKGALASVQQMIQLARKAGVPVLIDPKGTDFERYRGATLLTPNLSEFEAVVGKCKTEEEIVERGMKLIADYELSALLVTRSEQGMSLLQPGKAPLHMPTQAQEVYDVTGAGDTVIGVLAATLAAGNSLEEACFFANAAAGVVVGKLGTSTVSPIELENAVRGRADTGFGVMTEEELKLAVAAARKRGEKVVMTNGVFDILHAGHVSYLANARKLGDRLIVAVNSDASTKRLKGDSRPVNPLEQRMIVLGALEAVDWVVSFEEDTPQRLIAGILPDLLVKGGDYKPEEIAGSKEVWANGGEVLVLNFEDGCSTTNIIKKIQQDKKG</sequence>
<feature type="chain" id="PRO_1000185810" description="Bifunctional protein HldE">
    <location>
        <begin position="1"/>
        <end position="477"/>
    </location>
</feature>
<feature type="region of interest" description="Ribokinase">
    <location>
        <begin position="1"/>
        <end position="318"/>
    </location>
</feature>
<feature type="region of interest" description="Cytidylyltransferase">
    <location>
        <begin position="344"/>
        <end position="477"/>
    </location>
</feature>
<feature type="active site" evidence="1">
    <location>
        <position position="264"/>
    </location>
</feature>
<feature type="binding site" evidence="1">
    <location>
        <begin position="195"/>
        <end position="198"/>
    </location>
    <ligand>
        <name>ATP</name>
        <dbReference type="ChEBI" id="CHEBI:30616"/>
    </ligand>
</feature>
<feature type="modified residue" description="N6-acetyllysine" evidence="1">
    <location>
        <position position="179"/>
    </location>
</feature>
<name>HLDE_ECOSM</name>
<evidence type="ECO:0000255" key="1">
    <source>
        <dbReference type="HAMAP-Rule" id="MF_01603"/>
    </source>
</evidence>
<dbReference type="EC" id="2.7.1.167" evidence="1"/>
<dbReference type="EC" id="2.7.7.70" evidence="1"/>
<dbReference type="EMBL" id="CP000970">
    <property type="protein sequence ID" value="ACB19639.1"/>
    <property type="molecule type" value="Genomic_DNA"/>
</dbReference>
<dbReference type="RefSeq" id="WP_000869178.1">
    <property type="nucleotide sequence ID" value="NC_010498.1"/>
</dbReference>
<dbReference type="SMR" id="B1LF43"/>
<dbReference type="GeneID" id="75205361"/>
<dbReference type="KEGG" id="ecm:EcSMS35_3344"/>
<dbReference type="HOGENOM" id="CLU_021150_2_1_6"/>
<dbReference type="UniPathway" id="UPA00356">
    <property type="reaction ID" value="UER00437"/>
</dbReference>
<dbReference type="UniPathway" id="UPA00356">
    <property type="reaction ID" value="UER00439"/>
</dbReference>
<dbReference type="Proteomes" id="UP000007011">
    <property type="component" value="Chromosome"/>
</dbReference>
<dbReference type="GO" id="GO:0005829">
    <property type="term" value="C:cytosol"/>
    <property type="evidence" value="ECO:0007669"/>
    <property type="project" value="TreeGrafter"/>
</dbReference>
<dbReference type="GO" id="GO:0005524">
    <property type="term" value="F:ATP binding"/>
    <property type="evidence" value="ECO:0007669"/>
    <property type="project" value="UniProtKB-UniRule"/>
</dbReference>
<dbReference type="GO" id="GO:0033785">
    <property type="term" value="F:heptose 7-phosphate kinase activity"/>
    <property type="evidence" value="ECO:0007669"/>
    <property type="project" value="UniProtKB-UniRule"/>
</dbReference>
<dbReference type="GO" id="GO:0033786">
    <property type="term" value="F:heptose-1-phosphate adenylyltransferase activity"/>
    <property type="evidence" value="ECO:0007669"/>
    <property type="project" value="UniProtKB-UniRule"/>
</dbReference>
<dbReference type="GO" id="GO:0016773">
    <property type="term" value="F:phosphotransferase activity, alcohol group as acceptor"/>
    <property type="evidence" value="ECO:0007669"/>
    <property type="project" value="InterPro"/>
</dbReference>
<dbReference type="GO" id="GO:0097171">
    <property type="term" value="P:ADP-L-glycero-beta-D-manno-heptose biosynthetic process"/>
    <property type="evidence" value="ECO:0007669"/>
    <property type="project" value="UniProtKB-UniPathway"/>
</dbReference>
<dbReference type="CDD" id="cd01172">
    <property type="entry name" value="RfaE_like"/>
    <property type="match status" value="1"/>
</dbReference>
<dbReference type="FunFam" id="3.40.1190.20:FF:000002">
    <property type="entry name" value="Bifunctional protein HldE"/>
    <property type="match status" value="1"/>
</dbReference>
<dbReference type="FunFam" id="3.40.50.620:FF:000028">
    <property type="entry name" value="Bifunctional protein HldE"/>
    <property type="match status" value="1"/>
</dbReference>
<dbReference type="Gene3D" id="3.40.1190.20">
    <property type="match status" value="1"/>
</dbReference>
<dbReference type="Gene3D" id="3.40.50.620">
    <property type="entry name" value="HUPs"/>
    <property type="match status" value="1"/>
</dbReference>
<dbReference type="HAMAP" id="MF_01603">
    <property type="entry name" value="HldE"/>
    <property type="match status" value="1"/>
</dbReference>
<dbReference type="InterPro" id="IPR023030">
    <property type="entry name" value="Bifunc_HldE"/>
</dbReference>
<dbReference type="InterPro" id="IPR002173">
    <property type="entry name" value="Carboh/pur_kinase_PfkB_CS"/>
</dbReference>
<dbReference type="InterPro" id="IPR004821">
    <property type="entry name" value="Cyt_trans-like"/>
</dbReference>
<dbReference type="InterPro" id="IPR011611">
    <property type="entry name" value="PfkB_dom"/>
</dbReference>
<dbReference type="InterPro" id="IPR011913">
    <property type="entry name" value="RfaE_dom_I"/>
</dbReference>
<dbReference type="InterPro" id="IPR011914">
    <property type="entry name" value="RfaE_dom_II"/>
</dbReference>
<dbReference type="InterPro" id="IPR029056">
    <property type="entry name" value="Ribokinase-like"/>
</dbReference>
<dbReference type="InterPro" id="IPR014729">
    <property type="entry name" value="Rossmann-like_a/b/a_fold"/>
</dbReference>
<dbReference type="NCBIfam" id="TIGR00125">
    <property type="entry name" value="cyt_tran_rel"/>
    <property type="match status" value="1"/>
</dbReference>
<dbReference type="NCBIfam" id="NF008454">
    <property type="entry name" value="PRK11316.1"/>
    <property type="match status" value="1"/>
</dbReference>
<dbReference type="NCBIfam" id="TIGR02198">
    <property type="entry name" value="rfaE_dom_I"/>
    <property type="match status" value="1"/>
</dbReference>
<dbReference type="NCBIfam" id="TIGR02199">
    <property type="entry name" value="rfaE_dom_II"/>
    <property type="match status" value="1"/>
</dbReference>
<dbReference type="PANTHER" id="PTHR46969">
    <property type="entry name" value="BIFUNCTIONAL PROTEIN HLDE"/>
    <property type="match status" value="1"/>
</dbReference>
<dbReference type="PANTHER" id="PTHR46969:SF1">
    <property type="entry name" value="BIFUNCTIONAL PROTEIN HLDE"/>
    <property type="match status" value="1"/>
</dbReference>
<dbReference type="Pfam" id="PF01467">
    <property type="entry name" value="CTP_transf_like"/>
    <property type="match status" value="1"/>
</dbReference>
<dbReference type="Pfam" id="PF00294">
    <property type="entry name" value="PfkB"/>
    <property type="match status" value="1"/>
</dbReference>
<dbReference type="SUPFAM" id="SSF52374">
    <property type="entry name" value="Nucleotidylyl transferase"/>
    <property type="match status" value="1"/>
</dbReference>
<dbReference type="SUPFAM" id="SSF53613">
    <property type="entry name" value="Ribokinase-like"/>
    <property type="match status" value="1"/>
</dbReference>
<dbReference type="PROSITE" id="PS00583">
    <property type="entry name" value="PFKB_KINASES_1"/>
    <property type="match status" value="1"/>
</dbReference>
<keyword id="KW-0007">Acetylation</keyword>
<keyword id="KW-0067">ATP-binding</keyword>
<keyword id="KW-0119">Carbohydrate metabolism</keyword>
<keyword id="KW-0418">Kinase</keyword>
<keyword id="KW-0511">Multifunctional enzyme</keyword>
<keyword id="KW-0547">Nucleotide-binding</keyword>
<keyword id="KW-0548">Nucleotidyltransferase</keyword>
<keyword id="KW-0808">Transferase</keyword>
<proteinExistence type="inferred from homology"/>
<reference key="1">
    <citation type="journal article" date="2008" name="J. Bacteriol.">
        <title>Insights into the environmental resistance gene pool from the genome sequence of the multidrug-resistant environmental isolate Escherichia coli SMS-3-5.</title>
        <authorList>
            <person name="Fricke W.F."/>
            <person name="Wright M.S."/>
            <person name="Lindell A.H."/>
            <person name="Harkins D.M."/>
            <person name="Baker-Austin C."/>
            <person name="Ravel J."/>
            <person name="Stepanauskas R."/>
        </authorList>
    </citation>
    <scope>NUCLEOTIDE SEQUENCE [LARGE SCALE GENOMIC DNA]</scope>
    <source>
        <strain>SMS-3-5 / SECEC</strain>
    </source>
</reference>
<organism>
    <name type="scientific">Escherichia coli (strain SMS-3-5 / SECEC)</name>
    <dbReference type="NCBI Taxonomy" id="439855"/>
    <lineage>
        <taxon>Bacteria</taxon>
        <taxon>Pseudomonadati</taxon>
        <taxon>Pseudomonadota</taxon>
        <taxon>Gammaproteobacteria</taxon>
        <taxon>Enterobacterales</taxon>
        <taxon>Enterobacteriaceae</taxon>
        <taxon>Escherichia</taxon>
    </lineage>
</organism>
<protein>
    <recommendedName>
        <fullName evidence="1">Bifunctional protein HldE</fullName>
    </recommendedName>
    <domain>
        <recommendedName>
            <fullName evidence="1">D-beta-D-heptose 7-phosphate kinase</fullName>
            <ecNumber evidence="1">2.7.1.167</ecNumber>
        </recommendedName>
        <alternativeName>
            <fullName evidence="1">D-beta-D-heptose 7-phosphotransferase</fullName>
        </alternativeName>
        <alternativeName>
            <fullName evidence="1">D-glycero-beta-D-manno-heptose-7-phosphate kinase</fullName>
        </alternativeName>
    </domain>
    <domain>
        <recommendedName>
            <fullName evidence="1">D-beta-D-heptose 1-phosphate adenylyltransferase</fullName>
            <ecNumber evidence="1">2.7.7.70</ecNumber>
        </recommendedName>
        <alternativeName>
            <fullName evidence="1">D-glycero-beta-D-manno-heptose 1-phosphate adenylyltransferase</fullName>
        </alternativeName>
    </domain>
</protein>
<gene>
    <name evidence="1" type="primary">hldE</name>
    <name type="ordered locus">EcSMS35_3344</name>
</gene>